<gene>
    <name type="primary">nlp-32</name>
    <name type="ORF">F30H5.2</name>
</gene>
<organism>
    <name type="scientific">Caenorhabditis elegans</name>
    <dbReference type="NCBI Taxonomy" id="6239"/>
    <lineage>
        <taxon>Eukaryota</taxon>
        <taxon>Metazoa</taxon>
        <taxon>Ecdysozoa</taxon>
        <taxon>Nematoda</taxon>
        <taxon>Chromadorea</taxon>
        <taxon>Rhabditida</taxon>
        <taxon>Rhabditina</taxon>
        <taxon>Rhabditomorpha</taxon>
        <taxon>Rhabditoidea</taxon>
        <taxon>Rhabditidae</taxon>
        <taxon>Peloderinae</taxon>
        <taxon>Caenorhabditis</taxon>
    </lineage>
</organism>
<evidence type="ECO:0000255" key="1"/>
<evidence type="ECO:0000305" key="2"/>
<proteinExistence type="inferred from homology"/>
<accession>Q09982</accession>
<reference key="1">
    <citation type="journal article" date="1998" name="Science">
        <title>Genome sequence of the nematode C. elegans: a platform for investigating biology.</title>
        <authorList>
            <consortium name="The C. elegans sequencing consortium"/>
        </authorList>
    </citation>
    <scope>NUCLEOTIDE SEQUENCE [LARGE SCALE GENOMIC DNA]</scope>
    <source>
        <strain>Bristol N2</strain>
    </source>
</reference>
<reference key="2">
    <citation type="journal article" date="2001" name="Proc. Natl. Acad. Sci. U.S.A.">
        <title>Identification of neuropeptide-like protein gene families in Caenorhabditis elegans and other species.</title>
        <authorList>
            <person name="Nathoo A.N."/>
            <person name="Moeller R.A."/>
            <person name="Westlund B.A."/>
            <person name="Hart A.C."/>
        </authorList>
    </citation>
    <scope>IDENTIFICATION</scope>
</reference>
<dbReference type="EMBL" id="FO081108">
    <property type="protein sequence ID" value="CCD69154.1"/>
    <property type="molecule type" value="Genomic_DNA"/>
</dbReference>
<dbReference type="PIR" id="T16208">
    <property type="entry name" value="T16208"/>
</dbReference>
<dbReference type="RefSeq" id="NP_497204.1">
    <property type="nucleotide sequence ID" value="NM_064803.3"/>
</dbReference>
<dbReference type="FunCoup" id="Q09982">
    <property type="interactions" value="834"/>
</dbReference>
<dbReference type="STRING" id="6239.F30H5.2.1"/>
<dbReference type="PaxDb" id="6239-F30H5.2"/>
<dbReference type="EnsemblMetazoa" id="F30H5.2.1">
    <property type="protein sequence ID" value="F30H5.2.1"/>
    <property type="gene ID" value="WBGene00003770"/>
</dbReference>
<dbReference type="GeneID" id="185132"/>
<dbReference type="KEGG" id="cel:CELE_F30H5.2"/>
<dbReference type="UCSC" id="F30H5.2">
    <property type="organism name" value="c. elegans"/>
</dbReference>
<dbReference type="AGR" id="WB:WBGene00003770"/>
<dbReference type="CTD" id="185132"/>
<dbReference type="WormBase" id="F30H5.2">
    <property type="protein sequence ID" value="CE01926"/>
    <property type="gene ID" value="WBGene00003770"/>
    <property type="gene designation" value="nlp-32"/>
</dbReference>
<dbReference type="eggNOG" id="ENOG502TIPD">
    <property type="taxonomic scope" value="Eukaryota"/>
</dbReference>
<dbReference type="HOGENOM" id="CLU_2239019_0_0_1"/>
<dbReference type="InParanoid" id="Q09982"/>
<dbReference type="OMA" id="MEPMGAF"/>
<dbReference type="PRO" id="PR:Q09982"/>
<dbReference type="Proteomes" id="UP000001940">
    <property type="component" value="Chromosome III"/>
</dbReference>
<dbReference type="Bgee" id="WBGene00003770">
    <property type="expression patterns" value="Expressed in pharyngeal muscle cell (C elegans) and 3 other cell types or tissues"/>
</dbReference>
<dbReference type="GO" id="GO:0005576">
    <property type="term" value="C:extracellular region"/>
    <property type="evidence" value="ECO:0007669"/>
    <property type="project" value="UniProtKB-SubCell"/>
</dbReference>
<dbReference type="GO" id="GO:0007218">
    <property type="term" value="P:neuropeptide signaling pathway"/>
    <property type="evidence" value="ECO:0007669"/>
    <property type="project" value="UniProtKB-KW"/>
</dbReference>
<keyword id="KW-0027">Amidation</keyword>
<keyword id="KW-0165">Cleavage on pair of basic residues</keyword>
<keyword id="KW-0527">Neuropeptide</keyword>
<keyword id="KW-1185">Reference proteome</keyword>
<keyword id="KW-0964">Secreted</keyword>
<keyword id="KW-0732">Signal</keyword>
<sequence length="105" mass="10918">MRQFNLLLVFCLIALTALPVFSFPNGLTMDSIDMEPMGAFDENGAADESPRVKRYGGWGGRGGWGRGGGRGYGGRGGGWGGRGGGWGRGGGGRGFYGGGRRGWGK</sequence>
<protein>
    <recommendedName>
        <fullName>Neuropeptide-like protein 32</fullName>
    </recommendedName>
    <component>
        <recommendedName>
            <fullName>YGGWG-amide</fullName>
        </recommendedName>
    </component>
    <component>
        <recommendedName>
            <fullName>GGW-amide</fullName>
        </recommendedName>
    </component>
    <component>
        <recommendedName>
            <fullName>GG-amide</fullName>
        </recommendedName>
    </component>
    <component>
        <recommendedName>
            <fullName>GYG-amide</fullName>
        </recommendedName>
    </component>
    <component>
        <recommendedName>
            <fullName>GGGWG-amide</fullName>
        </recommendedName>
    </component>
    <component>
        <recommendedName>
            <fullName>GGGW-amide</fullName>
        </recommendedName>
    </component>
    <component>
        <recommendedName>
            <fullName>GGG-amide</fullName>
        </recommendedName>
    </component>
    <component>
        <recommendedName>
            <fullName>GFYGG-amide</fullName>
        </recommendedName>
    </component>
    <component>
        <recommendedName>
            <fullName>GW-amide</fullName>
        </recommendedName>
    </component>
</protein>
<comment type="function">
    <text>May have antimicrobial activity.</text>
</comment>
<comment type="subcellular location">
    <subcellularLocation>
        <location evidence="2">Secreted</location>
    </subcellularLocation>
</comment>
<comment type="similarity">
    <text evidence="2">Belongs to the YARP (YGGW-amide related peptide) family.</text>
</comment>
<feature type="signal peptide" evidence="1">
    <location>
        <begin position="1"/>
        <end position="22"/>
    </location>
</feature>
<feature type="propeptide" id="PRO_0000041511" evidence="1">
    <location>
        <begin position="23"/>
        <end position="54"/>
    </location>
</feature>
<feature type="peptide" id="PRO_0000041512" description="YGGWG-amide" evidence="1">
    <location>
        <begin position="55"/>
        <end position="59"/>
    </location>
</feature>
<feature type="peptide" id="PRO_0000041513" description="GGW-amide" evidence="1">
    <location>
        <begin position="62"/>
        <end position="64"/>
    </location>
</feature>
<feature type="peptide" id="PRO_0000041514" description="GG-amide" evidence="1">
    <location>
        <begin position="67"/>
        <end position="68"/>
    </location>
</feature>
<feature type="peptide" id="PRO_0000041515" description="GYG-amide" evidence="1">
    <location>
        <begin position="71"/>
        <end position="73"/>
    </location>
</feature>
<feature type="peptide" id="PRO_0000041516" description="GGGWG-amide" evidence="1">
    <location>
        <begin position="76"/>
        <end position="80"/>
    </location>
</feature>
<feature type="peptide" id="PRO_0000041517" description="GGGW-amide" evidence="1">
    <location>
        <begin position="83"/>
        <end position="86"/>
    </location>
</feature>
<feature type="peptide" id="PRO_0000041518" description="GGG-amide" evidence="1">
    <location>
        <begin position="89"/>
        <end position="91"/>
    </location>
</feature>
<feature type="peptide" id="PRO_0000041519" description="GFYGG-amide" evidence="1">
    <location>
        <begin position="94"/>
        <end position="98"/>
    </location>
</feature>
<feature type="peptide" id="PRO_0000041520" description="GW-amide" evidence="1">
    <location>
        <begin position="102"/>
        <end position="103"/>
    </location>
</feature>
<feature type="modified residue" description="Glycine amide" evidence="1">
    <location>
        <position position="59"/>
    </location>
</feature>
<feature type="modified residue" description="Tryptophan amide" evidence="1">
    <location>
        <position position="64"/>
    </location>
</feature>
<feature type="modified residue" description="Glycine amide" evidence="1">
    <location>
        <position position="68"/>
    </location>
</feature>
<feature type="modified residue" description="Glycine amide" evidence="1">
    <location>
        <position position="73"/>
    </location>
</feature>
<feature type="modified residue" description="Glycine amide" evidence="1">
    <location>
        <position position="80"/>
    </location>
</feature>
<feature type="modified residue" description="Tryptophan amide" evidence="1">
    <location>
        <position position="86"/>
    </location>
</feature>
<feature type="modified residue" description="Glycine amide" evidence="1">
    <location>
        <position position="91"/>
    </location>
</feature>
<feature type="modified residue" description="Glycine amide" evidence="1">
    <location>
        <position position="98"/>
    </location>
</feature>
<feature type="modified residue" description="Tryptophan amide" evidence="1">
    <location>
        <position position="103"/>
    </location>
</feature>
<name>NLP32_CAEEL</name>